<dbReference type="EC" id="3.1.3.-" evidence="1"/>
<dbReference type="EMBL" id="AM933173">
    <property type="protein sequence ID" value="CAR38155.1"/>
    <property type="molecule type" value="Genomic_DNA"/>
</dbReference>
<dbReference type="SMR" id="B5RCC1"/>
<dbReference type="KEGG" id="seg:SG2325"/>
<dbReference type="HOGENOM" id="CLU_106705_1_0_6"/>
<dbReference type="UniPathway" id="UPA00451"/>
<dbReference type="Proteomes" id="UP000008321">
    <property type="component" value="Chromosome"/>
</dbReference>
<dbReference type="GO" id="GO:0042597">
    <property type="term" value="C:periplasmic space"/>
    <property type="evidence" value="ECO:0007669"/>
    <property type="project" value="UniProtKB-SubCell"/>
</dbReference>
<dbReference type="GO" id="GO:0016791">
    <property type="term" value="F:phosphatase activity"/>
    <property type="evidence" value="ECO:0007669"/>
    <property type="project" value="UniProtKB-UniRule"/>
</dbReference>
<dbReference type="GO" id="GO:0008653">
    <property type="term" value="P:lipopolysaccharide metabolic process"/>
    <property type="evidence" value="ECO:0007669"/>
    <property type="project" value="UniProtKB-UniRule"/>
</dbReference>
<dbReference type="CDD" id="cd07040">
    <property type="entry name" value="HP"/>
    <property type="match status" value="1"/>
</dbReference>
<dbReference type="Gene3D" id="3.40.50.1240">
    <property type="entry name" value="Phosphoglycerate mutase-like"/>
    <property type="match status" value="1"/>
</dbReference>
<dbReference type="HAMAP" id="MF_01868">
    <property type="entry name" value="Ais"/>
    <property type="match status" value="1"/>
</dbReference>
<dbReference type="InterPro" id="IPR013078">
    <property type="entry name" value="His_Pase_superF_clade-1"/>
</dbReference>
<dbReference type="InterPro" id="IPR029033">
    <property type="entry name" value="His_PPase_superfam"/>
</dbReference>
<dbReference type="InterPro" id="IPR011310">
    <property type="entry name" value="LipoPS_heptP_Pase"/>
</dbReference>
<dbReference type="NCBIfam" id="NF011945">
    <property type="entry name" value="PRK15416.1"/>
    <property type="match status" value="1"/>
</dbReference>
<dbReference type="Pfam" id="PF00300">
    <property type="entry name" value="His_Phos_1"/>
    <property type="match status" value="1"/>
</dbReference>
<dbReference type="PIRSF" id="PIRSF011416">
    <property type="entry name" value="Ais-TraG-AfrS"/>
    <property type="match status" value="1"/>
</dbReference>
<dbReference type="SUPFAM" id="SSF53254">
    <property type="entry name" value="Phosphoglycerate mutase-like"/>
    <property type="match status" value="1"/>
</dbReference>
<keyword id="KW-0378">Hydrolase</keyword>
<keyword id="KW-0574">Periplasm</keyword>
<keyword id="KW-0732">Signal</keyword>
<organism>
    <name type="scientific">Salmonella gallinarum (strain 287/91 / NCTC 13346)</name>
    <dbReference type="NCBI Taxonomy" id="550538"/>
    <lineage>
        <taxon>Bacteria</taxon>
        <taxon>Pseudomonadati</taxon>
        <taxon>Pseudomonadota</taxon>
        <taxon>Gammaproteobacteria</taxon>
        <taxon>Enterobacterales</taxon>
        <taxon>Enterobacteriaceae</taxon>
        <taxon>Salmonella</taxon>
    </lineage>
</organism>
<sequence>MLAFTLRFIKNKRYFAILAGALVIIAGLTSQHAWSGNGLPQINGKALAALAKQHPVVVLFRHAERCDRSDNTCLSDSTGITVKGAQDARALGKAFSADIQNYNLYSSNTVRTIQSATWFSAGRSLTVDKKMMDCGSGIYASINTLLKKSQNKNIVIFTHNHCLTYIAKNKRGVKFDPDYLNALVMHAENGKLFLDGEFVPG</sequence>
<proteinExistence type="inferred from homology"/>
<name>AIS_SALG2</name>
<evidence type="ECO:0000255" key="1">
    <source>
        <dbReference type="HAMAP-Rule" id="MF_01868"/>
    </source>
</evidence>
<gene>
    <name evidence="1" type="primary">ais</name>
    <name type="ordered locus">SG2325</name>
</gene>
<protein>
    <recommendedName>
        <fullName evidence="1">Lipopolysaccharide core heptose(II)-phosphate phosphatase</fullName>
        <ecNumber evidence="1">3.1.3.-</ecNumber>
    </recommendedName>
</protein>
<reference key="1">
    <citation type="journal article" date="2008" name="Genome Res.">
        <title>Comparative genome analysis of Salmonella enteritidis PT4 and Salmonella gallinarum 287/91 provides insights into evolutionary and host adaptation pathways.</title>
        <authorList>
            <person name="Thomson N.R."/>
            <person name="Clayton D.J."/>
            <person name="Windhorst D."/>
            <person name="Vernikos G."/>
            <person name="Davidson S."/>
            <person name="Churcher C."/>
            <person name="Quail M.A."/>
            <person name="Stevens M."/>
            <person name="Jones M.A."/>
            <person name="Watson M."/>
            <person name="Barron A."/>
            <person name="Layton A."/>
            <person name="Pickard D."/>
            <person name="Kingsley R.A."/>
            <person name="Bignell A."/>
            <person name="Clark L."/>
            <person name="Harris B."/>
            <person name="Ormond D."/>
            <person name="Abdellah Z."/>
            <person name="Brooks K."/>
            <person name="Cherevach I."/>
            <person name="Chillingworth T."/>
            <person name="Woodward J."/>
            <person name="Norberczak H."/>
            <person name="Lord A."/>
            <person name="Arrowsmith C."/>
            <person name="Jagels K."/>
            <person name="Moule S."/>
            <person name="Mungall K."/>
            <person name="Saunders M."/>
            <person name="Whitehead S."/>
            <person name="Chabalgoity J.A."/>
            <person name="Maskell D."/>
            <person name="Humphreys T."/>
            <person name="Roberts M."/>
            <person name="Barrow P.A."/>
            <person name="Dougan G."/>
            <person name="Parkhill J."/>
        </authorList>
    </citation>
    <scope>NUCLEOTIDE SEQUENCE [LARGE SCALE GENOMIC DNA]</scope>
    <source>
        <strain>287/91 / NCTC 13346</strain>
    </source>
</reference>
<comment type="function">
    <text evidence="1">Catalyzes the dephosphorylation of heptose(II) of the outer membrane lipopolysaccharide core.</text>
</comment>
<comment type="pathway">
    <text evidence="1">Bacterial outer membrane biogenesis; lipopolysaccharide metabolism.</text>
</comment>
<comment type="subcellular location">
    <subcellularLocation>
        <location evidence="1">Periplasm</location>
    </subcellularLocation>
</comment>
<comment type="similarity">
    <text evidence="1">Belongs to the phosphoglycerate mutase family. Ais subfamily.</text>
</comment>
<accession>B5RCC1</accession>
<feature type="signal peptide" evidence="1">
    <location>
        <begin position="1"/>
        <end position="35"/>
    </location>
</feature>
<feature type="chain" id="PRO_5000398379" description="Lipopolysaccharide core heptose(II)-phosphate phosphatase">
    <location>
        <begin position="36"/>
        <end position="201"/>
    </location>
</feature>